<reference key="1">
    <citation type="journal article" date="2004" name="Proc. Natl. Acad. Sci. U.S.A.">
        <title>Hematopoietic gene expression profile in zebrafish kidney marrow.</title>
        <authorList>
            <person name="Song H.-D."/>
            <person name="Sun X.-J."/>
            <person name="Deng M."/>
            <person name="Zhang G.-W."/>
            <person name="Zhou Y."/>
            <person name="Wu X.-Y."/>
            <person name="Sheng Y."/>
            <person name="Chen Y."/>
            <person name="Ruan Z."/>
            <person name="Jiang C.-L."/>
            <person name="Fan H.-Y."/>
            <person name="Zon L.I."/>
            <person name="Kanki J.P."/>
            <person name="Liu T.X."/>
            <person name="Look A.T."/>
            <person name="Chen Z."/>
        </authorList>
    </citation>
    <scope>NUCLEOTIDE SEQUENCE [LARGE SCALE MRNA]</scope>
    <scope>TISSUE SPECIFICITY</scope>
    <source>
        <tissue>Kidney marrow</tissue>
    </source>
</reference>
<reference key="2">
    <citation type="submission" date="2003-10" db="EMBL/GenBank/DDBJ databases">
        <authorList>
            <consortium name="NIH - Zebrafish Gene Collection (ZGC) project"/>
        </authorList>
    </citation>
    <scope>NUCLEOTIDE SEQUENCE [LARGE SCALE MRNA]</scope>
    <source>
        <tissue>Eye</tissue>
    </source>
</reference>
<reference key="3">
    <citation type="journal article" date="2004" name="EMBO Rep.">
        <title>Reconsidering the evolution of eukaryotic selenoproteins: a novel nonmammalian family with scattered phylogenetic distribution.</title>
        <authorList>
            <person name="Castellano S."/>
            <person name="Novoselov S.V."/>
            <person name="Kryukov G.V."/>
            <person name="Lescure A."/>
            <person name="Blanco E."/>
            <person name="Krol A."/>
            <person name="Gladyshev V.N."/>
            <person name="Guigo R."/>
        </authorList>
    </citation>
    <scope>SELENOCYSTEINE AT SEC-74</scope>
    <scope>DEVELOPMENTAL STAGE</scope>
</reference>
<comment type="function">
    <text evidence="1">Involved in redox regulation of the cell. Acts as an antioxidant (By similarity).</text>
</comment>
<comment type="subcellular location">
    <subcellularLocation>
        <location evidence="1">Cytoplasm</location>
    </subcellularLocation>
</comment>
<comment type="tissue specificity">
    <text evidence="3">Expressed in kidney marrow.</text>
</comment>
<comment type="developmental stage">
    <text evidence="2">Widely expressed in all embryonic tissues from all stages. Expression is already detectable at the early stages from gastrula and somitogenesis, but within the embryonic tissues only; there is no expression within the nutrient cells of the yolk syncytial layer. Later in development, expression remains high and nonrestricted.</text>
</comment>
<comment type="miscellaneous">
    <text>The active site Cys-77 corresponds to one of the redox-active cysteines of peroxiredoxins.</text>
</comment>
<comment type="similarity">
    <text evidence="4">Belongs to the peroxiredoxin-like PRXL2 family. PRXL2A subfamily.</text>
</comment>
<comment type="sequence caution" evidence="4">
    <conflict type="erroneous termination">
        <sequence resource="EMBL-CDS" id="AAH59634"/>
    </conflict>
    <text>Truncated C-terminus.</text>
</comment>
<comment type="sequence caution" evidence="4">
    <conflict type="erroneous termination">
        <sequence resource="EMBL-CDS" id="AAQ91253"/>
    </conflict>
    <text>Truncated C-terminus.</text>
</comment>
<organism>
    <name type="scientific">Danio rerio</name>
    <name type="common">Zebrafish</name>
    <name type="synonym">Brachydanio rerio</name>
    <dbReference type="NCBI Taxonomy" id="7955"/>
    <lineage>
        <taxon>Eukaryota</taxon>
        <taxon>Metazoa</taxon>
        <taxon>Chordata</taxon>
        <taxon>Craniata</taxon>
        <taxon>Vertebrata</taxon>
        <taxon>Euteleostomi</taxon>
        <taxon>Actinopterygii</taxon>
        <taxon>Neopterygii</taxon>
        <taxon>Teleostei</taxon>
        <taxon>Ostariophysi</taxon>
        <taxon>Cypriniformes</taxon>
        <taxon>Danionidae</taxon>
        <taxon>Danioninae</taxon>
        <taxon>Danio</taxon>
    </lineage>
</organism>
<evidence type="ECO:0000250" key="1"/>
<evidence type="ECO:0000269" key="2">
    <source>
    </source>
</evidence>
<evidence type="ECO:0000269" key="3">
    <source>
    </source>
</evidence>
<evidence type="ECO:0000305" key="4"/>
<keyword id="KW-0049">Antioxidant</keyword>
<keyword id="KW-0963">Cytoplasm</keyword>
<keyword id="KW-0676">Redox-active center</keyword>
<keyword id="KW-1185">Reference proteome</keyword>
<keyword id="KW-0712">Selenocysteine</keyword>
<proteinExistence type="evidence at transcript level"/>
<sequence>MGMWSLGLGAVGAAIAGLILANTDFLLTKSAPATVDYLANADLKTIDGDERSLKAKALWEKSGAVIMAVRRPGUFLCREEASELSSLKPQLDELGVPLYAVVKENVGTEIQDFRPHFAGEIFLDEKQAFYGPQQRKMGGLGFIRLGVWQNFVRAWRAGYQGNMNGEGFILGGVFVMGSGGQGVLLEHREKEFGDKVSLESVLEAAKKVVVEK</sequence>
<dbReference type="EMBL" id="AY391441">
    <property type="protein sequence ID" value="AAQ91253.1"/>
    <property type="status" value="ALT_SEQ"/>
    <property type="molecule type" value="mRNA"/>
</dbReference>
<dbReference type="EMBL" id="BC059634">
    <property type="protein sequence ID" value="AAH59634.1"/>
    <property type="status" value="ALT_SEQ"/>
    <property type="molecule type" value="mRNA"/>
</dbReference>
<dbReference type="RefSeq" id="NP_001180454.1">
    <property type="nucleotide sequence ID" value="NM_001193525.1"/>
</dbReference>
<dbReference type="FunCoup" id="Q6PBP3">
    <property type="interactions" value="474"/>
</dbReference>
<dbReference type="STRING" id="7955.ENSDARP00000149078"/>
<dbReference type="PaxDb" id="7955-ENSDARP00000074475"/>
<dbReference type="Ensembl" id="ENSDART00000147905">
    <property type="protein sequence ID" value="ENSDARP00000115912"/>
    <property type="gene ID" value="ENSDARG00000057378"/>
</dbReference>
<dbReference type="Ensembl" id="ENSDART00000188249">
    <property type="protein sequence ID" value="ENSDARP00000149078"/>
    <property type="gene ID" value="ENSDARG00000057378"/>
</dbReference>
<dbReference type="GeneID" id="323739"/>
<dbReference type="KEGG" id="dre:323739"/>
<dbReference type="AGR" id="ZFIN:ZDB-GENE-030131-2459"/>
<dbReference type="CTD" id="323739"/>
<dbReference type="ZFIN" id="ZDB-GENE-030131-2459">
    <property type="gene designation" value="selenou1a"/>
</dbReference>
<dbReference type="eggNOG" id="KOG4498">
    <property type="taxonomic scope" value="Eukaryota"/>
</dbReference>
<dbReference type="HOGENOM" id="CLU_086062_0_0_1"/>
<dbReference type="InParanoid" id="Q6PBP3"/>
<dbReference type="OMA" id="SMGMWSL"/>
<dbReference type="OrthoDB" id="40334at2759"/>
<dbReference type="PhylomeDB" id="Q6PBP3"/>
<dbReference type="PRO" id="PR:Q6PBP3"/>
<dbReference type="Proteomes" id="UP000000437">
    <property type="component" value="Alternate scaffold 13"/>
</dbReference>
<dbReference type="Proteomes" id="UP000000437">
    <property type="component" value="Chromosome 13"/>
</dbReference>
<dbReference type="Bgee" id="ENSDARG00000057378">
    <property type="expression patterns" value="Expressed in liver and 26 other cell types or tissues"/>
</dbReference>
<dbReference type="ExpressionAtlas" id="Q6PBP3">
    <property type="expression patterns" value="baseline and differential"/>
</dbReference>
<dbReference type="GO" id="GO:0005737">
    <property type="term" value="C:cytoplasm"/>
    <property type="evidence" value="ECO:0000318"/>
    <property type="project" value="GO_Central"/>
</dbReference>
<dbReference type="GO" id="GO:0016209">
    <property type="term" value="F:antioxidant activity"/>
    <property type="evidence" value="ECO:0000318"/>
    <property type="project" value="GO_Central"/>
</dbReference>
<dbReference type="CDD" id="cd02970">
    <property type="entry name" value="PRX_like2"/>
    <property type="match status" value="1"/>
</dbReference>
<dbReference type="FunFam" id="3.40.30.10:FF:000312">
    <property type="entry name" value="redox-regulatory protein FAM213A isoform X1"/>
    <property type="match status" value="1"/>
</dbReference>
<dbReference type="Gene3D" id="3.40.30.10">
    <property type="entry name" value="Glutaredoxin"/>
    <property type="match status" value="1"/>
</dbReference>
<dbReference type="InterPro" id="IPR032801">
    <property type="entry name" value="PXL2A/B/C"/>
</dbReference>
<dbReference type="InterPro" id="IPR036249">
    <property type="entry name" value="Thioredoxin-like_sf"/>
</dbReference>
<dbReference type="PANTHER" id="PTHR28630">
    <property type="match status" value="1"/>
</dbReference>
<dbReference type="PANTHER" id="PTHR28630:SF31">
    <property type="entry name" value="PEROXIREDOXIN-LIKE 2A"/>
    <property type="match status" value="1"/>
</dbReference>
<dbReference type="Pfam" id="PF13911">
    <property type="entry name" value="AhpC-TSA_2"/>
    <property type="match status" value="1"/>
</dbReference>
<dbReference type="SUPFAM" id="SSF52833">
    <property type="entry name" value="Thioredoxin-like"/>
    <property type="match status" value="1"/>
</dbReference>
<feature type="chain" id="PRO_0000398783" description="Peroxiredoxin-like 2A">
    <location>
        <begin position="1"/>
        <end position="212"/>
    </location>
</feature>
<feature type="region of interest" description="Thioredoxin fold" evidence="1">
    <location>
        <begin position="3"/>
        <end position="101"/>
    </location>
</feature>
<feature type="active site" description="Redox-active" evidence="1">
    <location>
        <position position="77"/>
    </location>
</feature>
<feature type="non-standard amino acid" description="Selenocysteine" evidence="2">
    <location>
        <position position="74"/>
    </location>
</feature>
<accession>Q6PBP3</accession>
<gene>
    <name type="primary">prxl2a</name>
    <name type="synonym">fam213a</name>
    <name type="synonym">pamm</name>
    <name type="ORF">zgc:73311</name>
</gene>
<protein>
    <recommendedName>
        <fullName>Peroxiredoxin-like 2A</fullName>
    </recommendedName>
    <alternativeName>
        <fullName>Peroxiredoxin-like 2 activated in M-CSF stimulated monocytes</fullName>
        <shortName>Protein PAMM</shortName>
    </alternativeName>
    <alternativeName>
        <fullName>Redox-regulatory protein FAM213A</fullName>
    </alternativeName>
</protein>
<name>PXL2A_DANRE</name>